<keyword id="KW-0961">Cell wall biogenesis/degradation</keyword>
<keyword id="KW-0178">Competence</keyword>
<keyword id="KW-0378">Hydrolase</keyword>
<keyword id="KW-1185">Reference proteome</keyword>
<keyword id="KW-0964">Secreted</keyword>
<keyword id="KW-0732">Signal</keyword>
<keyword id="KW-0749">Sporulation</keyword>
<evidence type="ECO:0000250" key="1"/>
<evidence type="ECO:0000255" key="2"/>
<evidence type="ECO:0000255" key="3">
    <source>
        <dbReference type="PROSITE-ProRule" id="PRU01118"/>
    </source>
</evidence>
<evidence type="ECO:0000305" key="4"/>
<name>XLYB_BACSU</name>
<protein>
    <recommendedName>
        <fullName>N-acetylmuramoyl-L-alanine amidase XlyB</fullName>
        <ecNumber>3.5.1.28</ecNumber>
    </recommendedName>
    <alternativeName>
        <fullName>Autolysin</fullName>
    </alternativeName>
    <alternativeName>
        <fullName>Cell wall hydrolase</fullName>
    </alternativeName>
</protein>
<proteinExistence type="inferred from homology"/>
<feature type="signal peptide" evidence="1">
    <location>
        <begin position="1"/>
        <end position="39"/>
    </location>
</feature>
<feature type="chain" id="PRO_0000006458" description="N-acetylmuramoyl-L-alanine amidase XlyB">
    <location>
        <begin position="40"/>
        <end position="317"/>
    </location>
</feature>
<feature type="domain" description="N-acetylmuramoyl-L-alanine amidase" evidence="2">
    <location>
        <begin position="40"/>
        <end position="142"/>
    </location>
</feature>
<feature type="domain" description="LysM" evidence="3">
    <location>
        <begin position="177"/>
        <end position="221"/>
    </location>
</feature>
<sequence>MSIPVKKNLVSEAKYALKCPNAMSAEYITIHNTANDASAANEISYMIGNTSSTSFHFAVDDQEVIQGLPLNRNAWHTGDGTNGPGNRKSIGVEICYSKSGGPKYEAAEALAISFVAQLLKERGWGIDRVRKHQDWSGKYCPHRILSEGRWDQVKAAIEKELNGGVSAKKAAVSSSASEYHVKKGDTLSGIAASHGASVKTLQSINHITDPNHIKIGQVIKLPQTASASKSHAASSYPLPSGVIKVTSPLTQGTKVKQVQTALAALYFYPDKGAKNHGVDGVYGPKTANAVKRFQSVSGLTADGIYGPKTKAKMEEKL</sequence>
<gene>
    <name type="primary">xlyB</name>
    <name type="synonym">yjpB</name>
    <name type="ordered locus">BSU12460</name>
</gene>
<reference key="1">
    <citation type="submission" date="1997-11" db="EMBL/GenBank/DDBJ databases">
        <title>Sequencing and characterisation of the region comprising xlyB, the second lytic enzyme of the defective prophage PBSX of Bacillus subtilis.</title>
        <authorList>
            <person name="da Silva E."/>
            <person name="Karamata D."/>
        </authorList>
    </citation>
    <scope>NUCLEOTIDE SEQUENCE [GENOMIC DNA]</scope>
    <source>
        <strain>168</strain>
    </source>
</reference>
<reference key="2">
    <citation type="journal article" date="1997" name="Nature">
        <title>The complete genome sequence of the Gram-positive bacterium Bacillus subtilis.</title>
        <authorList>
            <person name="Kunst F."/>
            <person name="Ogasawara N."/>
            <person name="Moszer I."/>
            <person name="Albertini A.M."/>
            <person name="Alloni G."/>
            <person name="Azevedo V."/>
            <person name="Bertero M.G."/>
            <person name="Bessieres P."/>
            <person name="Bolotin A."/>
            <person name="Borchert S."/>
            <person name="Borriss R."/>
            <person name="Boursier L."/>
            <person name="Brans A."/>
            <person name="Braun M."/>
            <person name="Brignell S.C."/>
            <person name="Bron S."/>
            <person name="Brouillet S."/>
            <person name="Bruschi C.V."/>
            <person name="Caldwell B."/>
            <person name="Capuano V."/>
            <person name="Carter N.M."/>
            <person name="Choi S.-K."/>
            <person name="Codani J.-J."/>
            <person name="Connerton I.F."/>
            <person name="Cummings N.J."/>
            <person name="Daniel R.A."/>
            <person name="Denizot F."/>
            <person name="Devine K.M."/>
            <person name="Duesterhoeft A."/>
            <person name="Ehrlich S.D."/>
            <person name="Emmerson P.T."/>
            <person name="Entian K.-D."/>
            <person name="Errington J."/>
            <person name="Fabret C."/>
            <person name="Ferrari E."/>
            <person name="Foulger D."/>
            <person name="Fritz C."/>
            <person name="Fujita M."/>
            <person name="Fujita Y."/>
            <person name="Fuma S."/>
            <person name="Galizzi A."/>
            <person name="Galleron N."/>
            <person name="Ghim S.-Y."/>
            <person name="Glaser P."/>
            <person name="Goffeau A."/>
            <person name="Golightly E.J."/>
            <person name="Grandi G."/>
            <person name="Guiseppi G."/>
            <person name="Guy B.J."/>
            <person name="Haga K."/>
            <person name="Haiech J."/>
            <person name="Harwood C.R."/>
            <person name="Henaut A."/>
            <person name="Hilbert H."/>
            <person name="Holsappel S."/>
            <person name="Hosono S."/>
            <person name="Hullo M.-F."/>
            <person name="Itaya M."/>
            <person name="Jones L.-M."/>
            <person name="Joris B."/>
            <person name="Karamata D."/>
            <person name="Kasahara Y."/>
            <person name="Klaerr-Blanchard M."/>
            <person name="Klein C."/>
            <person name="Kobayashi Y."/>
            <person name="Koetter P."/>
            <person name="Koningstein G."/>
            <person name="Krogh S."/>
            <person name="Kumano M."/>
            <person name="Kurita K."/>
            <person name="Lapidus A."/>
            <person name="Lardinois S."/>
            <person name="Lauber J."/>
            <person name="Lazarevic V."/>
            <person name="Lee S.-M."/>
            <person name="Levine A."/>
            <person name="Liu H."/>
            <person name="Masuda S."/>
            <person name="Mauel C."/>
            <person name="Medigue C."/>
            <person name="Medina N."/>
            <person name="Mellado R.P."/>
            <person name="Mizuno M."/>
            <person name="Moestl D."/>
            <person name="Nakai S."/>
            <person name="Noback M."/>
            <person name="Noone D."/>
            <person name="O'Reilly M."/>
            <person name="Ogawa K."/>
            <person name="Ogiwara A."/>
            <person name="Oudega B."/>
            <person name="Park S.-H."/>
            <person name="Parro V."/>
            <person name="Pohl T.M."/>
            <person name="Portetelle D."/>
            <person name="Porwollik S."/>
            <person name="Prescott A.M."/>
            <person name="Presecan E."/>
            <person name="Pujic P."/>
            <person name="Purnelle B."/>
            <person name="Rapoport G."/>
            <person name="Rey M."/>
            <person name="Reynolds S."/>
            <person name="Rieger M."/>
            <person name="Rivolta C."/>
            <person name="Rocha E."/>
            <person name="Roche B."/>
            <person name="Rose M."/>
            <person name="Sadaie Y."/>
            <person name="Sato T."/>
            <person name="Scanlan E."/>
            <person name="Schleich S."/>
            <person name="Schroeter R."/>
            <person name="Scoffone F."/>
            <person name="Sekiguchi J."/>
            <person name="Sekowska A."/>
            <person name="Seror S.J."/>
            <person name="Serror P."/>
            <person name="Shin B.-S."/>
            <person name="Soldo B."/>
            <person name="Sorokin A."/>
            <person name="Tacconi E."/>
            <person name="Takagi T."/>
            <person name="Takahashi H."/>
            <person name="Takemaru K."/>
            <person name="Takeuchi M."/>
            <person name="Tamakoshi A."/>
            <person name="Tanaka T."/>
            <person name="Terpstra P."/>
            <person name="Tognoni A."/>
            <person name="Tosato V."/>
            <person name="Uchiyama S."/>
            <person name="Vandenbol M."/>
            <person name="Vannier F."/>
            <person name="Vassarotti A."/>
            <person name="Viari A."/>
            <person name="Wambutt R."/>
            <person name="Wedler E."/>
            <person name="Wedler H."/>
            <person name="Weitzenegger T."/>
            <person name="Winters P."/>
            <person name="Wipat A."/>
            <person name="Yamamoto H."/>
            <person name="Yamane K."/>
            <person name="Yasumoto K."/>
            <person name="Yata K."/>
            <person name="Yoshida K."/>
            <person name="Yoshikawa H.-F."/>
            <person name="Zumstein E."/>
            <person name="Yoshikawa H."/>
            <person name="Danchin A."/>
        </authorList>
    </citation>
    <scope>NUCLEOTIDE SEQUENCE [LARGE SCALE GENOMIC DNA]</scope>
    <source>
        <strain>168</strain>
    </source>
</reference>
<dbReference type="EC" id="3.5.1.28"/>
<dbReference type="EMBL" id="AF034138">
    <property type="protein sequence ID" value="AAB87514.1"/>
    <property type="molecule type" value="Genomic_DNA"/>
</dbReference>
<dbReference type="EMBL" id="AL009126">
    <property type="protein sequence ID" value="CAB13103.1"/>
    <property type="molecule type" value="Genomic_DNA"/>
</dbReference>
<dbReference type="PIR" id="B69734">
    <property type="entry name" value="B69734"/>
</dbReference>
<dbReference type="RefSeq" id="NP_389128.1">
    <property type="nucleotide sequence ID" value="NC_000964.3"/>
</dbReference>
<dbReference type="RefSeq" id="WP_003244876.1">
    <property type="nucleotide sequence ID" value="NZ_OZ025638.1"/>
</dbReference>
<dbReference type="SMR" id="O34391"/>
<dbReference type="FunCoup" id="O34391">
    <property type="interactions" value="40"/>
</dbReference>
<dbReference type="STRING" id="224308.BSU12460"/>
<dbReference type="PaxDb" id="224308-BSU12460"/>
<dbReference type="EnsemblBacteria" id="CAB13103">
    <property type="protein sequence ID" value="CAB13103"/>
    <property type="gene ID" value="BSU_12460"/>
</dbReference>
<dbReference type="GeneID" id="936464"/>
<dbReference type="KEGG" id="bsu:BSU12460"/>
<dbReference type="PATRIC" id="fig|224308.179.peg.1347"/>
<dbReference type="eggNOG" id="COG1388">
    <property type="taxonomic scope" value="Bacteria"/>
</dbReference>
<dbReference type="eggNOG" id="COG3409">
    <property type="taxonomic scope" value="Bacteria"/>
</dbReference>
<dbReference type="eggNOG" id="COG5632">
    <property type="taxonomic scope" value="Bacteria"/>
</dbReference>
<dbReference type="InParanoid" id="O34391"/>
<dbReference type="OrthoDB" id="9794294at2"/>
<dbReference type="PhylomeDB" id="O34391"/>
<dbReference type="BioCyc" id="BSUB:BSU12460-MONOMER"/>
<dbReference type="Proteomes" id="UP000001570">
    <property type="component" value="Chromosome"/>
</dbReference>
<dbReference type="GO" id="GO:0005576">
    <property type="term" value="C:extracellular region"/>
    <property type="evidence" value="ECO:0007669"/>
    <property type="project" value="UniProtKB-SubCell"/>
</dbReference>
<dbReference type="GO" id="GO:0008745">
    <property type="term" value="F:N-acetylmuramoyl-L-alanine amidase activity"/>
    <property type="evidence" value="ECO:0000318"/>
    <property type="project" value="GO_Central"/>
</dbReference>
<dbReference type="GO" id="GO:0071555">
    <property type="term" value="P:cell wall organization"/>
    <property type="evidence" value="ECO:0007669"/>
    <property type="project" value="UniProtKB-KW"/>
</dbReference>
<dbReference type="GO" id="GO:0030420">
    <property type="term" value="P:establishment of competence for transformation"/>
    <property type="evidence" value="ECO:0007669"/>
    <property type="project" value="UniProtKB-KW"/>
</dbReference>
<dbReference type="GO" id="GO:0009253">
    <property type="term" value="P:peptidoglycan catabolic process"/>
    <property type="evidence" value="ECO:0000318"/>
    <property type="project" value="GO_Central"/>
</dbReference>
<dbReference type="GO" id="GO:0009254">
    <property type="term" value="P:peptidoglycan turnover"/>
    <property type="evidence" value="ECO:0000318"/>
    <property type="project" value="GO_Central"/>
</dbReference>
<dbReference type="GO" id="GO:0030435">
    <property type="term" value="P:sporulation resulting in formation of a cellular spore"/>
    <property type="evidence" value="ECO:0007669"/>
    <property type="project" value="UniProtKB-KW"/>
</dbReference>
<dbReference type="CDD" id="cd00118">
    <property type="entry name" value="LysM"/>
    <property type="match status" value="1"/>
</dbReference>
<dbReference type="CDD" id="cd06583">
    <property type="entry name" value="PGRP"/>
    <property type="match status" value="1"/>
</dbReference>
<dbReference type="Gene3D" id="3.10.350.10">
    <property type="entry name" value="LysM domain"/>
    <property type="match status" value="1"/>
</dbReference>
<dbReference type="Gene3D" id="3.40.80.10">
    <property type="entry name" value="Peptidoglycan recognition protein-like"/>
    <property type="match status" value="1"/>
</dbReference>
<dbReference type="Gene3D" id="1.10.101.10">
    <property type="entry name" value="PGBD-like superfamily/PGBD"/>
    <property type="match status" value="1"/>
</dbReference>
<dbReference type="InterPro" id="IPR036505">
    <property type="entry name" value="Amidase/PGRP_sf"/>
</dbReference>
<dbReference type="InterPro" id="IPR002502">
    <property type="entry name" value="Amidase_domain"/>
</dbReference>
<dbReference type="InterPro" id="IPR018392">
    <property type="entry name" value="LysM_dom"/>
</dbReference>
<dbReference type="InterPro" id="IPR036779">
    <property type="entry name" value="LysM_dom_sf"/>
</dbReference>
<dbReference type="InterPro" id="IPR051206">
    <property type="entry name" value="NAMLAA_amidase_2"/>
</dbReference>
<dbReference type="InterPro" id="IPR002477">
    <property type="entry name" value="Peptidoglycan-bd-like"/>
</dbReference>
<dbReference type="InterPro" id="IPR036365">
    <property type="entry name" value="PGBD-like_sf"/>
</dbReference>
<dbReference type="InterPro" id="IPR036366">
    <property type="entry name" value="PGBDSf"/>
</dbReference>
<dbReference type="PANTHER" id="PTHR30417">
    <property type="entry name" value="N-ACETYLMURAMOYL-L-ALANINE AMIDASE AMID"/>
    <property type="match status" value="1"/>
</dbReference>
<dbReference type="PANTHER" id="PTHR30417:SF11">
    <property type="entry name" value="N-ACETYLMURAMOYL-L-ALANINE AMIDASE XLYA"/>
    <property type="match status" value="1"/>
</dbReference>
<dbReference type="Pfam" id="PF01510">
    <property type="entry name" value="Amidase_2"/>
    <property type="match status" value="1"/>
</dbReference>
<dbReference type="Pfam" id="PF01476">
    <property type="entry name" value="LysM"/>
    <property type="match status" value="1"/>
</dbReference>
<dbReference type="Pfam" id="PF01471">
    <property type="entry name" value="PG_binding_1"/>
    <property type="match status" value="1"/>
</dbReference>
<dbReference type="SMART" id="SM00644">
    <property type="entry name" value="Ami_2"/>
    <property type="match status" value="1"/>
</dbReference>
<dbReference type="SMART" id="SM00257">
    <property type="entry name" value="LysM"/>
    <property type="match status" value="1"/>
</dbReference>
<dbReference type="SUPFAM" id="SSF54106">
    <property type="entry name" value="LysM domain"/>
    <property type="match status" value="1"/>
</dbReference>
<dbReference type="SUPFAM" id="SSF55846">
    <property type="entry name" value="N-acetylmuramoyl-L-alanine amidase-like"/>
    <property type="match status" value="1"/>
</dbReference>
<dbReference type="SUPFAM" id="SSF47090">
    <property type="entry name" value="PGBD-like"/>
    <property type="match status" value="1"/>
</dbReference>
<dbReference type="PROSITE" id="PS51782">
    <property type="entry name" value="LYSM"/>
    <property type="match status" value="1"/>
</dbReference>
<organism>
    <name type="scientific">Bacillus subtilis (strain 168)</name>
    <dbReference type="NCBI Taxonomy" id="224308"/>
    <lineage>
        <taxon>Bacteria</taxon>
        <taxon>Bacillati</taxon>
        <taxon>Bacillota</taxon>
        <taxon>Bacilli</taxon>
        <taxon>Bacillales</taxon>
        <taxon>Bacillaceae</taxon>
        <taxon>Bacillus</taxon>
    </lineage>
</organism>
<comment type="function">
    <text evidence="1">Autolysins are involved in some important biological processes such as cell separation, cell-wall turnover, competence for genetic transformation, formation of the flagella and sporulation.</text>
</comment>
<comment type="catalytic activity">
    <reaction>
        <text>Hydrolyzes the link between N-acetylmuramoyl residues and L-amino acid residues in certain cell-wall glycopeptides.</text>
        <dbReference type="EC" id="3.5.1.28"/>
    </reaction>
</comment>
<comment type="subcellular location">
    <subcellularLocation>
        <location evidence="4">Secreted</location>
    </subcellularLocation>
</comment>
<comment type="similarity">
    <text evidence="4">Belongs to the N-acetylmuramoyl-L-alanine amidase 2 family.</text>
</comment>
<accession>O34391</accession>